<name>CYB_AUSSU</name>
<keyword id="KW-0249">Electron transport</keyword>
<keyword id="KW-0349">Heme</keyword>
<keyword id="KW-0408">Iron</keyword>
<keyword id="KW-0472">Membrane</keyword>
<keyword id="KW-0479">Metal-binding</keyword>
<keyword id="KW-0496">Mitochondrion</keyword>
<keyword id="KW-0999">Mitochondrion inner membrane</keyword>
<keyword id="KW-0679">Respiratory chain</keyword>
<keyword id="KW-0812">Transmembrane</keyword>
<keyword id="KW-1133">Transmembrane helix</keyword>
<keyword id="KW-0813">Transport</keyword>
<keyword id="KW-0830">Ubiquinone</keyword>
<sequence length="367" mass="41562">MPNQHILLSSNLLPVGSNISTWWNFGSMLLTCLILQTSTGFFLAIHYTANINLAFSSVIHILRDVPYGWIMQNTHAIGASMFFICIYIHIARGLYYGLYLNKKVWLSGTALLIILMATAFFGYVLPWGQMSFWAATVITNLLTAIPYLGVTLTTWLWGGFSINDPTLTRFFALHFILPFLIISLSSIHIILLHNEGSNNPLGTNPDIDKIPFHPYHSYKDVLMVTIMITILFTIMSFTPNLFNDPENFSKANPLVTPQHIKPEWYFLFAYGILRSIPNKLGGTLALLMSVIILTTAPFTHTSNVRSMTFRPLTQALFWTLIVTFITITWTATKPVEPPFIFISQMASAIYFSFFIINPILGWTENKL</sequence>
<comment type="function">
    <text evidence="2">Component of the ubiquinol-cytochrome c reductase complex (complex III or cytochrome b-c1 complex) that is part of the mitochondrial respiratory chain. The b-c1 complex mediates electron transfer from ubiquinol to cytochrome c. Contributes to the generation of a proton gradient across the mitochondrial membrane that is then used for ATP synthesis.</text>
</comment>
<comment type="cofactor">
    <cofactor evidence="2">
        <name>heme b</name>
        <dbReference type="ChEBI" id="CHEBI:60344"/>
    </cofactor>
    <text evidence="2">Binds 2 heme b groups non-covalently.</text>
</comment>
<comment type="subunit">
    <text evidence="2">The cytochrome bc1 complex contains 3 respiratory subunits (MT-CYB, CYC1 and UQCRFS1), 2 core proteins (UQCRC1 and UQCRC2) and probably 6 low-molecular weight proteins.</text>
</comment>
<comment type="subcellular location">
    <subcellularLocation>
        <location evidence="2">Mitochondrion inner membrane</location>
        <topology evidence="2">Multi-pass membrane protein</topology>
    </subcellularLocation>
</comment>
<comment type="miscellaneous">
    <text evidence="1">Heme 1 (or BL or b562) is low-potential and absorbs at about 562 nm, and heme 2 (or BH or b566) is high-potential and absorbs at about 566 nm.</text>
</comment>
<comment type="similarity">
    <text evidence="3 4">Belongs to the cytochrome b family.</text>
</comment>
<comment type="caution">
    <text evidence="2">The full-length protein contains only eight transmembrane helices, not nine as predicted by bioinformatics tools.</text>
</comment>
<protein>
    <recommendedName>
        <fullName>Cytochrome b</fullName>
    </recommendedName>
    <alternativeName>
        <fullName>Complex III subunit 3</fullName>
    </alternativeName>
    <alternativeName>
        <fullName>Complex III subunit III</fullName>
    </alternativeName>
    <alternativeName>
        <fullName>Cytochrome b-c1 complex subunit 3</fullName>
    </alternativeName>
    <alternativeName>
        <fullName>Ubiquinol-cytochrome-c reductase complex cytochrome b subunit</fullName>
    </alternativeName>
</protein>
<geneLocation type="mitochondrion"/>
<dbReference type="EMBL" id="AF217815">
    <property type="protein sequence ID" value="AAF37234.1"/>
    <property type="molecule type" value="Genomic_DNA"/>
</dbReference>
<dbReference type="SMR" id="Q9MLL3"/>
<dbReference type="GO" id="GO:0005743">
    <property type="term" value="C:mitochondrial inner membrane"/>
    <property type="evidence" value="ECO:0007669"/>
    <property type="project" value="UniProtKB-SubCell"/>
</dbReference>
<dbReference type="GO" id="GO:0045275">
    <property type="term" value="C:respiratory chain complex III"/>
    <property type="evidence" value="ECO:0007669"/>
    <property type="project" value="InterPro"/>
</dbReference>
<dbReference type="GO" id="GO:0046872">
    <property type="term" value="F:metal ion binding"/>
    <property type="evidence" value="ECO:0007669"/>
    <property type="project" value="UniProtKB-KW"/>
</dbReference>
<dbReference type="GO" id="GO:0008121">
    <property type="term" value="F:ubiquinol-cytochrome-c reductase activity"/>
    <property type="evidence" value="ECO:0007669"/>
    <property type="project" value="InterPro"/>
</dbReference>
<dbReference type="GO" id="GO:0006122">
    <property type="term" value="P:mitochondrial electron transport, ubiquinol to cytochrome c"/>
    <property type="evidence" value="ECO:0007669"/>
    <property type="project" value="TreeGrafter"/>
</dbReference>
<dbReference type="CDD" id="cd00290">
    <property type="entry name" value="cytochrome_b_C"/>
    <property type="match status" value="1"/>
</dbReference>
<dbReference type="CDD" id="cd00284">
    <property type="entry name" value="Cytochrome_b_N"/>
    <property type="match status" value="1"/>
</dbReference>
<dbReference type="Gene3D" id="1.20.810.10">
    <property type="entry name" value="Cytochrome Bc1 Complex, Chain C"/>
    <property type="match status" value="1"/>
</dbReference>
<dbReference type="InterPro" id="IPR005798">
    <property type="entry name" value="Cyt_b/b6_C"/>
</dbReference>
<dbReference type="InterPro" id="IPR036150">
    <property type="entry name" value="Cyt_b/b6_C_sf"/>
</dbReference>
<dbReference type="InterPro" id="IPR005797">
    <property type="entry name" value="Cyt_b/b6_N"/>
</dbReference>
<dbReference type="InterPro" id="IPR027387">
    <property type="entry name" value="Cytb/b6-like_sf"/>
</dbReference>
<dbReference type="InterPro" id="IPR030689">
    <property type="entry name" value="Cytochrome_b"/>
</dbReference>
<dbReference type="InterPro" id="IPR048260">
    <property type="entry name" value="Cytochrome_b_C_euk/bac"/>
</dbReference>
<dbReference type="InterPro" id="IPR048259">
    <property type="entry name" value="Cytochrome_b_N_euk/bac"/>
</dbReference>
<dbReference type="InterPro" id="IPR016174">
    <property type="entry name" value="Di-haem_cyt_TM"/>
</dbReference>
<dbReference type="PANTHER" id="PTHR19271">
    <property type="entry name" value="CYTOCHROME B"/>
    <property type="match status" value="1"/>
</dbReference>
<dbReference type="PANTHER" id="PTHR19271:SF16">
    <property type="entry name" value="CYTOCHROME B"/>
    <property type="match status" value="1"/>
</dbReference>
<dbReference type="Pfam" id="PF00032">
    <property type="entry name" value="Cytochrom_B_C"/>
    <property type="match status" value="1"/>
</dbReference>
<dbReference type="Pfam" id="PF00033">
    <property type="entry name" value="Cytochrome_B"/>
    <property type="match status" value="1"/>
</dbReference>
<dbReference type="PIRSF" id="PIRSF038885">
    <property type="entry name" value="COB"/>
    <property type="match status" value="1"/>
</dbReference>
<dbReference type="SUPFAM" id="SSF81648">
    <property type="entry name" value="a domain/subunit of cytochrome bc1 complex (Ubiquinol-cytochrome c reductase)"/>
    <property type="match status" value="1"/>
</dbReference>
<dbReference type="SUPFAM" id="SSF81342">
    <property type="entry name" value="Transmembrane di-heme cytochromes"/>
    <property type="match status" value="1"/>
</dbReference>
<dbReference type="PROSITE" id="PS51003">
    <property type="entry name" value="CYTB_CTER"/>
    <property type="match status" value="1"/>
</dbReference>
<dbReference type="PROSITE" id="PS51002">
    <property type="entry name" value="CYTB_NTER"/>
    <property type="match status" value="1"/>
</dbReference>
<gene>
    <name type="primary">MT-CYB</name>
    <name type="synonym">COB</name>
    <name type="synonym">CYTB</name>
    <name type="synonym">MTCYB</name>
</gene>
<evidence type="ECO:0000250" key="1"/>
<evidence type="ECO:0000250" key="2">
    <source>
        <dbReference type="UniProtKB" id="P00157"/>
    </source>
</evidence>
<evidence type="ECO:0000255" key="3">
    <source>
        <dbReference type="PROSITE-ProRule" id="PRU00967"/>
    </source>
</evidence>
<evidence type="ECO:0000255" key="4">
    <source>
        <dbReference type="PROSITE-ProRule" id="PRU00968"/>
    </source>
</evidence>
<organism>
    <name type="scientific">Austrelaps superbus</name>
    <name type="common">Lowland copperhead snake</name>
    <name type="synonym">Hoplocephalus superbus</name>
    <dbReference type="NCBI Taxonomy" id="29156"/>
    <lineage>
        <taxon>Eukaryota</taxon>
        <taxon>Metazoa</taxon>
        <taxon>Chordata</taxon>
        <taxon>Craniata</taxon>
        <taxon>Vertebrata</taxon>
        <taxon>Euteleostomi</taxon>
        <taxon>Lepidosauria</taxon>
        <taxon>Squamata</taxon>
        <taxon>Bifurcata</taxon>
        <taxon>Unidentata</taxon>
        <taxon>Episquamata</taxon>
        <taxon>Toxicofera</taxon>
        <taxon>Serpentes</taxon>
        <taxon>Colubroidea</taxon>
        <taxon>Elapidae</taxon>
        <taxon>Hydrophiinae</taxon>
        <taxon>Austrelaps</taxon>
    </lineage>
</organism>
<feature type="chain" id="PRO_0000060652" description="Cytochrome b">
    <location>
        <begin position="1"/>
        <end position="367"/>
    </location>
</feature>
<feature type="transmembrane region" description="Helical" evidence="2">
    <location>
        <begin position="25"/>
        <end position="45"/>
    </location>
</feature>
<feature type="transmembrane region" description="Helical" evidence="2">
    <location>
        <begin position="69"/>
        <end position="90"/>
    </location>
</feature>
<feature type="transmembrane region" description="Helical" evidence="2">
    <location>
        <begin position="105"/>
        <end position="125"/>
    </location>
</feature>
<feature type="transmembrane region" description="Helical" evidence="2">
    <location>
        <begin position="170"/>
        <end position="190"/>
    </location>
</feature>
<feature type="transmembrane region" description="Helical" evidence="2">
    <location>
        <begin position="218"/>
        <end position="238"/>
    </location>
</feature>
<feature type="transmembrane region" description="Helical" evidence="2">
    <location>
        <begin position="280"/>
        <end position="300"/>
    </location>
</feature>
<feature type="transmembrane region" description="Helical" evidence="2">
    <location>
        <begin position="312"/>
        <end position="332"/>
    </location>
</feature>
<feature type="transmembrane region" description="Helical" evidence="2">
    <location>
        <begin position="339"/>
        <end position="358"/>
    </location>
</feature>
<feature type="binding site" description="axial binding residue" evidence="2">
    <location>
        <position position="75"/>
    </location>
    <ligand>
        <name>heme b</name>
        <dbReference type="ChEBI" id="CHEBI:60344"/>
        <label>b562</label>
    </ligand>
    <ligandPart>
        <name>Fe</name>
        <dbReference type="ChEBI" id="CHEBI:18248"/>
    </ligandPart>
</feature>
<feature type="binding site" description="axial binding residue" evidence="2">
    <location>
        <position position="89"/>
    </location>
    <ligand>
        <name>heme b</name>
        <dbReference type="ChEBI" id="CHEBI:60344"/>
        <label>b566</label>
    </ligand>
    <ligandPart>
        <name>Fe</name>
        <dbReference type="ChEBI" id="CHEBI:18248"/>
    </ligandPart>
</feature>
<feature type="binding site" description="axial binding residue" evidence="2">
    <location>
        <position position="174"/>
    </location>
    <ligand>
        <name>heme b</name>
        <dbReference type="ChEBI" id="CHEBI:60344"/>
        <label>b562</label>
    </ligand>
    <ligandPart>
        <name>Fe</name>
        <dbReference type="ChEBI" id="CHEBI:18248"/>
    </ligandPart>
</feature>
<feature type="binding site" description="axial binding residue" evidence="2">
    <location>
        <position position="188"/>
    </location>
    <ligand>
        <name>heme b</name>
        <dbReference type="ChEBI" id="CHEBI:60344"/>
        <label>b566</label>
    </ligand>
    <ligandPart>
        <name>Fe</name>
        <dbReference type="ChEBI" id="CHEBI:18248"/>
    </ligandPart>
</feature>
<feature type="binding site" evidence="2">
    <location>
        <position position="193"/>
    </location>
    <ligand>
        <name>a ubiquinone</name>
        <dbReference type="ChEBI" id="CHEBI:16389"/>
    </ligand>
</feature>
<proteinExistence type="inferred from homology"/>
<accession>Q9MLL3</accession>
<reference key="1">
    <citation type="journal article" date="2000" name="Mol. Phylogenet. Evol.">
        <title>Phylogenetic relationships of elapid snakes based on cytochrome b mtDNA sequences.</title>
        <authorList>
            <person name="Slowinski J.B."/>
            <person name="Keogh J.S."/>
        </authorList>
    </citation>
    <scope>NUCLEOTIDE SEQUENCE [GENOMIC DNA]</scope>
</reference>